<feature type="chain" id="PRO_0000094467" description="Chloride channel protein CLC-c">
    <location>
        <begin position="1"/>
        <end position="779"/>
    </location>
</feature>
<feature type="transmembrane region" description="Helical; Name=1" evidence="2">
    <location>
        <begin position="92"/>
        <end position="112"/>
    </location>
</feature>
<feature type="transmembrane region" description="Helical; Name=2" evidence="2">
    <location>
        <begin position="142"/>
        <end position="162"/>
    </location>
</feature>
<feature type="transmembrane region" description="Helical; Name=3" evidence="2">
    <location>
        <begin position="190"/>
        <end position="210"/>
    </location>
</feature>
<feature type="transmembrane region" description="Helical; Name=4" evidence="2">
    <location>
        <begin position="215"/>
        <end position="235"/>
    </location>
</feature>
<feature type="transmembrane region" description="Helical; Name=5" evidence="2">
    <location>
        <begin position="257"/>
        <end position="277"/>
    </location>
</feature>
<feature type="transmembrane region" description="Helical; Name=6" evidence="2">
    <location>
        <begin position="287"/>
        <end position="307"/>
    </location>
</feature>
<feature type="transmembrane region" description="Helical; Name=7" evidence="2">
    <location>
        <begin position="341"/>
        <end position="361"/>
    </location>
</feature>
<feature type="transmembrane region" description="Helical; Name=8" evidence="2">
    <location>
        <begin position="380"/>
        <end position="400"/>
    </location>
</feature>
<feature type="transmembrane region" description="Helical; Name=9" evidence="2">
    <location>
        <begin position="466"/>
        <end position="486"/>
    </location>
</feature>
<feature type="transmembrane region" description="Helical; Name=10" evidence="2">
    <location>
        <begin position="488"/>
        <end position="508"/>
    </location>
</feature>
<feature type="transmembrane region" description="Helical; Name=11" evidence="2">
    <location>
        <begin position="520"/>
        <end position="540"/>
    </location>
</feature>
<feature type="transmembrane region" description="Helical; Name=12" evidence="2">
    <location>
        <begin position="541"/>
        <end position="561"/>
    </location>
</feature>
<feature type="transmembrane region" description="Helical; Name=13" evidence="2">
    <location>
        <begin position="741"/>
        <end position="761"/>
    </location>
</feature>
<feature type="domain" description="CBS 1" evidence="3">
    <location>
        <begin position="601"/>
        <end position="659"/>
    </location>
</feature>
<feature type="domain" description="CBS 2" evidence="3">
    <location>
        <begin position="713"/>
        <end position="777"/>
    </location>
</feature>
<feature type="modified residue" description="Phosphoserine" evidence="6 7">
    <location>
        <position position="27"/>
    </location>
</feature>
<feature type="modified residue" description="Phosphoserine" evidence="6 7">
    <location>
        <position position="672"/>
    </location>
</feature>
<name>CLCC_ARATH</name>
<gene>
    <name type="primary">CLC-C</name>
    <name type="synonym">CBSCLC4</name>
    <name type="ordered locus">At5g49890</name>
    <name type="ORF">K9P8.3</name>
</gene>
<evidence type="ECO:0000250" key="1"/>
<evidence type="ECO:0000255" key="2"/>
<evidence type="ECO:0000255" key="3">
    <source>
        <dbReference type="PROSITE-ProRule" id="PRU00703"/>
    </source>
</evidence>
<evidence type="ECO:0000269" key="4">
    <source>
    </source>
</evidence>
<evidence type="ECO:0000305" key="5"/>
<evidence type="ECO:0007744" key="6">
    <source>
    </source>
</evidence>
<evidence type="ECO:0007744" key="7">
    <source>
    </source>
</evidence>
<comment type="function">
    <text>Voltage-gated chloride channel.</text>
</comment>
<comment type="subunit">
    <text evidence="1 4">Homodimer (By similarity). Interacts with PP2A5 (PubMed:27676158).</text>
</comment>
<comment type="subcellular location">
    <subcellularLocation>
        <location>Membrane</location>
        <topology>Multi-pass membrane protein</topology>
    </subcellularLocation>
</comment>
<comment type="tissue specificity">
    <text>Broadly expressed in the plant.</text>
</comment>
<comment type="similarity">
    <text evidence="5">Belongs to the chloride channel (TC 2.A.49) family.</text>
</comment>
<dbReference type="EMBL" id="Z71447">
    <property type="protein sequence ID" value="CAA96059.1"/>
    <property type="molecule type" value="mRNA"/>
</dbReference>
<dbReference type="EMBL" id="Y09095">
    <property type="protein sequence ID" value="CAA70310.1"/>
    <property type="molecule type" value="mRNA"/>
</dbReference>
<dbReference type="EMBL" id="AB024032">
    <property type="protein sequence ID" value="BAA97010.1"/>
    <property type="molecule type" value="Genomic_DNA"/>
</dbReference>
<dbReference type="EMBL" id="CP002688">
    <property type="protein sequence ID" value="AED95868.1"/>
    <property type="molecule type" value="Genomic_DNA"/>
</dbReference>
<dbReference type="EMBL" id="AY120754">
    <property type="protein sequence ID" value="AAM53312.1"/>
    <property type="molecule type" value="mRNA"/>
</dbReference>
<dbReference type="EMBL" id="BT001211">
    <property type="protein sequence ID" value="AAN65098.1"/>
    <property type="molecule type" value="mRNA"/>
</dbReference>
<dbReference type="RefSeq" id="NP_199800.1">
    <property type="nucleotide sequence ID" value="NM_124367.4"/>
</dbReference>
<dbReference type="SMR" id="Q96282"/>
<dbReference type="BioGRID" id="20298">
    <property type="interactions" value="8"/>
</dbReference>
<dbReference type="FunCoup" id="Q96282">
    <property type="interactions" value="2928"/>
</dbReference>
<dbReference type="IntAct" id="Q96282">
    <property type="interactions" value="8"/>
</dbReference>
<dbReference type="STRING" id="3702.Q96282"/>
<dbReference type="iPTMnet" id="Q96282"/>
<dbReference type="PaxDb" id="3702-AT5G49890.1"/>
<dbReference type="ProteomicsDB" id="246820"/>
<dbReference type="EnsemblPlants" id="AT5G49890.1">
    <property type="protein sequence ID" value="AT5G49890.1"/>
    <property type="gene ID" value="AT5G49890"/>
</dbReference>
<dbReference type="GeneID" id="835052"/>
<dbReference type="Gramene" id="AT5G49890.1">
    <property type="protein sequence ID" value="AT5G49890.1"/>
    <property type="gene ID" value="AT5G49890"/>
</dbReference>
<dbReference type="KEGG" id="ath:AT5G49890"/>
<dbReference type="Araport" id="AT5G49890"/>
<dbReference type="TAIR" id="AT5G49890">
    <property type="gene designation" value="CLC-C"/>
</dbReference>
<dbReference type="eggNOG" id="KOG0474">
    <property type="taxonomic scope" value="Eukaryota"/>
</dbReference>
<dbReference type="HOGENOM" id="CLU_003181_4_0_1"/>
<dbReference type="InParanoid" id="Q96282"/>
<dbReference type="OMA" id="YLIRLKW"/>
<dbReference type="PhylomeDB" id="Q96282"/>
<dbReference type="PRO" id="PR:Q96282"/>
<dbReference type="Proteomes" id="UP000006548">
    <property type="component" value="Chromosome 5"/>
</dbReference>
<dbReference type="ExpressionAtlas" id="Q96282">
    <property type="expression patterns" value="baseline and differential"/>
</dbReference>
<dbReference type="GO" id="GO:0034707">
    <property type="term" value="C:chloride channel complex"/>
    <property type="evidence" value="ECO:0007669"/>
    <property type="project" value="UniProtKB-KW"/>
</dbReference>
<dbReference type="GO" id="GO:0000325">
    <property type="term" value="C:plant-type vacuole"/>
    <property type="evidence" value="ECO:0007005"/>
    <property type="project" value="TAIR"/>
</dbReference>
<dbReference type="GO" id="GO:0009705">
    <property type="term" value="C:plant-type vacuole membrane"/>
    <property type="evidence" value="ECO:0000314"/>
    <property type="project" value="TAIR"/>
</dbReference>
<dbReference type="GO" id="GO:0009536">
    <property type="term" value="C:plastid"/>
    <property type="evidence" value="ECO:0007005"/>
    <property type="project" value="TAIR"/>
</dbReference>
<dbReference type="GO" id="GO:0005247">
    <property type="term" value="F:voltage-gated chloride channel activity"/>
    <property type="evidence" value="ECO:0007669"/>
    <property type="project" value="InterPro"/>
</dbReference>
<dbReference type="CDD" id="cd04591">
    <property type="entry name" value="CBS_pair_voltage-gated_CLC_euk_bac"/>
    <property type="match status" value="1"/>
</dbReference>
<dbReference type="CDD" id="cd03685">
    <property type="entry name" value="ClC_6_like"/>
    <property type="match status" value="1"/>
</dbReference>
<dbReference type="FunFam" id="1.10.3080.10:FF:000004">
    <property type="entry name" value="Chloride channel ClC3"/>
    <property type="match status" value="1"/>
</dbReference>
<dbReference type="Gene3D" id="3.10.580.10">
    <property type="entry name" value="CBS-domain"/>
    <property type="match status" value="1"/>
</dbReference>
<dbReference type="Gene3D" id="1.10.3080.10">
    <property type="entry name" value="Clc chloride channel"/>
    <property type="match status" value="1"/>
</dbReference>
<dbReference type="InterPro" id="IPR000644">
    <property type="entry name" value="CBS_dom"/>
</dbReference>
<dbReference type="InterPro" id="IPR046342">
    <property type="entry name" value="CBS_dom_sf"/>
</dbReference>
<dbReference type="InterPro" id="IPR051280">
    <property type="entry name" value="Cl-channel/antiporter"/>
</dbReference>
<dbReference type="InterPro" id="IPR014743">
    <property type="entry name" value="Cl-channel_core"/>
</dbReference>
<dbReference type="InterPro" id="IPR002251">
    <property type="entry name" value="Cl_channel_pln"/>
</dbReference>
<dbReference type="InterPro" id="IPR001807">
    <property type="entry name" value="ClC"/>
</dbReference>
<dbReference type="PANTHER" id="PTHR11689">
    <property type="entry name" value="CHLORIDE CHANNEL PROTEIN CLC FAMILY MEMBER"/>
    <property type="match status" value="1"/>
</dbReference>
<dbReference type="PANTHER" id="PTHR11689:SF165">
    <property type="entry name" value="CHLORIDE CHANNEL PROTEIN CLC-C"/>
    <property type="match status" value="1"/>
</dbReference>
<dbReference type="Pfam" id="PF00571">
    <property type="entry name" value="CBS"/>
    <property type="match status" value="1"/>
</dbReference>
<dbReference type="Pfam" id="PF00654">
    <property type="entry name" value="Voltage_CLC"/>
    <property type="match status" value="1"/>
</dbReference>
<dbReference type="PRINTS" id="PR00762">
    <property type="entry name" value="CLCHANNEL"/>
</dbReference>
<dbReference type="PRINTS" id="PR01120">
    <property type="entry name" value="CLCHANNELPLT"/>
</dbReference>
<dbReference type="SMART" id="SM00116">
    <property type="entry name" value="CBS"/>
    <property type="match status" value="2"/>
</dbReference>
<dbReference type="SUPFAM" id="SSF54631">
    <property type="entry name" value="CBS-domain pair"/>
    <property type="match status" value="1"/>
</dbReference>
<dbReference type="SUPFAM" id="SSF81340">
    <property type="entry name" value="Clc chloride channel"/>
    <property type="match status" value="1"/>
</dbReference>
<dbReference type="PROSITE" id="PS51371">
    <property type="entry name" value="CBS"/>
    <property type="match status" value="1"/>
</dbReference>
<protein>
    <recommendedName>
        <fullName>Chloride channel protein CLC-c</fullName>
        <shortName>AtCLC-c</shortName>
    </recommendedName>
    <alternativeName>
        <fullName>CBS domain-containing protein CBSCLC4</fullName>
    </alternativeName>
</protein>
<organism>
    <name type="scientific">Arabidopsis thaliana</name>
    <name type="common">Mouse-ear cress</name>
    <dbReference type="NCBI Taxonomy" id="3702"/>
    <lineage>
        <taxon>Eukaryota</taxon>
        <taxon>Viridiplantae</taxon>
        <taxon>Streptophyta</taxon>
        <taxon>Embryophyta</taxon>
        <taxon>Tracheophyta</taxon>
        <taxon>Spermatophyta</taxon>
        <taxon>Magnoliopsida</taxon>
        <taxon>eudicotyledons</taxon>
        <taxon>Gunneridae</taxon>
        <taxon>Pentapetalae</taxon>
        <taxon>rosids</taxon>
        <taxon>malvids</taxon>
        <taxon>Brassicales</taxon>
        <taxon>Brassicaceae</taxon>
        <taxon>Camelineae</taxon>
        <taxon>Arabidopsis</taxon>
    </lineage>
</organism>
<proteinExistence type="evidence at protein level"/>
<accession>Q96282</accession>
<accession>O04753</accession>
<accession>O04837</accession>
<sequence length="779" mass="85232">MDDRHEGDHHDIEVEGGALHGFERKISGILDDGSVGFRQPLLARNRKNTTSQIAIVGANTCPIESLDYEIFENDFFKQDWRSRKKIEILQYTFLKWALAFLIGLATGLVGFLNNLGVENIAGFKLLLIGNLMLKEKYFQAFFAFAGCNLILATAAASLCAFIAPAAAGSGIPEVKAYLNGIDAYSILAPSTLFVKIFGSIFGVAAGFVVGKEGPMVHTGACIANLLGQGGSKKYRLTWKWLRFFKNDRDRRDLITCGAAAGVAAAFRAPVGGVLFALEEAASWWRNALLWRTFFTTAVVAVVLRSLIEFCRSGRCGLFGKGGLIMFDVNSGPVLYSTPDLLAIVFLGVIGGVLGSLYNYLVDKVLRTYSIINEKGPRFKIMLVMAVSILSSCCAFGLPWLSQCTPCPIGIEEGKCPSVGRSSIYKSFQCPPNHYNDLSSLLLNTNDDAIRNLFTSRSENEFHISTLAIFFVAVYCLGIITYGIAIPSGLFIPVILAGASYGRLVGRLLGPVSQLDVGLFSLLGAASFLGGTMRMTVSLCVILLELTNNLLMLPLVMLVLLISKTVADCFNRGVYDQIVTMKGLPYMEDHAEPYMRNLVAKDVVSGALISFSRVEKVGVIWQALKMTRHNGFPVIDEPPFTEASELCGIALRSHLLVLLQGKKFSKQRTTFGSQILRSCKARDFGKAGLGKGLKIEDLDLSEEEMEMYVDLHPITNTSPYTVLETLSLAKAAILFRQLGLRHLCVVPKTPGRPPIVGILTRHDFMPEHVLGLYPHIDPLK</sequence>
<reference key="1">
    <citation type="journal article" date="1996" name="J. Biol. Chem.">
        <title>A family of putative chloride channels from Arabidopsis and functional complementation of a yeast strain with a CLC gene disruption.</title>
        <authorList>
            <person name="Hechenberger M."/>
            <person name="Schwappach B."/>
            <person name="Fischer W.N."/>
            <person name="Frommer W.B."/>
            <person name="Jentsch T.J."/>
            <person name="Steinmeyer K."/>
        </authorList>
    </citation>
    <scope>NUCLEOTIDE SEQUENCE [MRNA]</scope>
    <scope>CHARACTERIZATION</scope>
    <source>
        <strain>cv. Columbia</strain>
    </source>
</reference>
<reference key="2">
    <citation type="submission" date="1996-10" db="EMBL/GenBank/DDBJ databases">
        <authorList>
            <person name="Weigmann N."/>
            <person name="Zimmermann S."/>
            <person name="Mueller-Roeber B."/>
        </authorList>
    </citation>
    <scope>NUCLEOTIDE SEQUENCE [MRNA]</scope>
    <source>
        <strain>cv. C24</strain>
    </source>
</reference>
<reference key="3">
    <citation type="journal article" date="2000" name="DNA Res.">
        <title>Structural analysis of Arabidopsis thaliana chromosome 5. X. Sequence features of the regions of 3,076,755 bp covered by sixty P1 and TAC clones.</title>
        <authorList>
            <person name="Sato S."/>
            <person name="Nakamura Y."/>
            <person name="Kaneko T."/>
            <person name="Katoh T."/>
            <person name="Asamizu E."/>
            <person name="Kotani H."/>
            <person name="Tabata S."/>
        </authorList>
    </citation>
    <scope>NUCLEOTIDE SEQUENCE [LARGE SCALE GENOMIC DNA]</scope>
    <source>
        <strain>cv. Columbia</strain>
    </source>
</reference>
<reference key="4">
    <citation type="journal article" date="2017" name="Plant J.">
        <title>Araport11: a complete reannotation of the Arabidopsis thaliana reference genome.</title>
        <authorList>
            <person name="Cheng C.Y."/>
            <person name="Krishnakumar V."/>
            <person name="Chan A.P."/>
            <person name="Thibaud-Nissen F."/>
            <person name="Schobel S."/>
            <person name="Town C.D."/>
        </authorList>
    </citation>
    <scope>GENOME REANNOTATION</scope>
    <source>
        <strain>cv. Columbia</strain>
    </source>
</reference>
<reference key="5">
    <citation type="journal article" date="2003" name="Science">
        <title>Empirical analysis of transcriptional activity in the Arabidopsis genome.</title>
        <authorList>
            <person name="Yamada K."/>
            <person name="Lim J."/>
            <person name="Dale J.M."/>
            <person name="Chen H."/>
            <person name="Shinn P."/>
            <person name="Palm C.J."/>
            <person name="Southwick A.M."/>
            <person name="Wu H.C."/>
            <person name="Kim C.J."/>
            <person name="Nguyen M."/>
            <person name="Pham P.K."/>
            <person name="Cheuk R.F."/>
            <person name="Karlin-Newmann G."/>
            <person name="Liu S.X."/>
            <person name="Lam B."/>
            <person name="Sakano H."/>
            <person name="Wu T."/>
            <person name="Yu G."/>
            <person name="Miranda M."/>
            <person name="Quach H.L."/>
            <person name="Tripp M."/>
            <person name="Chang C.H."/>
            <person name="Lee J.M."/>
            <person name="Toriumi M.J."/>
            <person name="Chan M.M."/>
            <person name="Tang C.C."/>
            <person name="Onodera C.S."/>
            <person name="Deng J.M."/>
            <person name="Akiyama K."/>
            <person name="Ansari Y."/>
            <person name="Arakawa T."/>
            <person name="Banh J."/>
            <person name="Banno F."/>
            <person name="Bowser L."/>
            <person name="Brooks S.Y."/>
            <person name="Carninci P."/>
            <person name="Chao Q."/>
            <person name="Choy N."/>
            <person name="Enju A."/>
            <person name="Goldsmith A.D."/>
            <person name="Gurjal M."/>
            <person name="Hansen N.F."/>
            <person name="Hayashizaki Y."/>
            <person name="Johnson-Hopson C."/>
            <person name="Hsuan V.W."/>
            <person name="Iida K."/>
            <person name="Karnes M."/>
            <person name="Khan S."/>
            <person name="Koesema E."/>
            <person name="Ishida J."/>
            <person name="Jiang P.X."/>
            <person name="Jones T."/>
            <person name="Kawai J."/>
            <person name="Kamiya A."/>
            <person name="Meyers C."/>
            <person name="Nakajima M."/>
            <person name="Narusaka M."/>
            <person name="Seki M."/>
            <person name="Sakurai T."/>
            <person name="Satou M."/>
            <person name="Tamse R."/>
            <person name="Vaysberg M."/>
            <person name="Wallender E.K."/>
            <person name="Wong C."/>
            <person name="Yamamura Y."/>
            <person name="Yuan S."/>
            <person name="Shinozaki K."/>
            <person name="Davis R.W."/>
            <person name="Theologis A."/>
            <person name="Ecker J.R."/>
        </authorList>
    </citation>
    <scope>NUCLEOTIDE SEQUENCE [LARGE SCALE MRNA]</scope>
    <source>
        <strain>cv. Columbia</strain>
    </source>
</reference>
<reference key="6">
    <citation type="journal article" date="2009" name="BMC Genomics">
        <title>Genome wide expression analysis of CBS domain containing proteins in Arabidopsis thaliana (L.) Heynh and Oryza sativa L. reveals their developmental and stress regulation.</title>
        <authorList>
            <person name="Kushwaha H.R."/>
            <person name="Singh A.K."/>
            <person name="Sopory S.K."/>
            <person name="Singla-Pareek S.L."/>
            <person name="Pareek A."/>
        </authorList>
    </citation>
    <scope>GENE FAMILY</scope>
    <scope>NOMENCLATURE</scope>
</reference>
<reference key="7">
    <citation type="journal article" date="2009" name="J. Proteomics">
        <title>Phosphoproteomic analysis of nuclei-enriched fractions from Arabidopsis thaliana.</title>
        <authorList>
            <person name="Jones A.M.E."/>
            <person name="MacLean D."/>
            <person name="Studholme D.J."/>
            <person name="Serna-Sanz A."/>
            <person name="Andreasson E."/>
            <person name="Rathjen J.P."/>
            <person name="Peck S.C."/>
        </authorList>
    </citation>
    <scope>PHOSPHORYLATION [LARGE SCALE ANALYSIS] AT SER-27 AND SER-672</scope>
    <scope>IDENTIFICATION BY MASS SPECTROMETRY [LARGE SCALE ANALYSIS]</scope>
    <source>
        <strain>cv. Columbia</strain>
    </source>
</reference>
<reference key="8">
    <citation type="journal article" date="2009" name="Plant Physiol.">
        <title>Large-scale Arabidopsis phosphoproteome profiling reveals novel chloroplast kinase substrates and phosphorylation networks.</title>
        <authorList>
            <person name="Reiland S."/>
            <person name="Messerli G."/>
            <person name="Baerenfaller K."/>
            <person name="Gerrits B."/>
            <person name="Endler A."/>
            <person name="Grossmann J."/>
            <person name="Gruissem W."/>
            <person name="Baginsky S."/>
        </authorList>
    </citation>
    <scope>PHOSPHORYLATION [LARGE SCALE ANALYSIS] AT SER-27 AND SER-672</scope>
    <scope>IDENTIFICATION BY MASS SPECTROMETRY [LARGE SCALE ANALYSIS]</scope>
</reference>
<reference key="9">
    <citation type="journal article" date="2017" name="Plant Cell Environ.">
        <title>Overexpression of PP2A-C5 that encodes the catalytic subunit 5 of protein phosphatase 2A in Arabidopsis confers better root and shoot development under salt conditions.</title>
        <authorList>
            <person name="Hu R."/>
            <person name="Zhu Y."/>
            <person name="Wei J."/>
            <person name="Chen J."/>
            <person name="Shi H."/>
            <person name="Shen G."/>
            <person name="Zhang H."/>
        </authorList>
    </citation>
    <scope>INTERACTION WITH PP2A5</scope>
</reference>
<keyword id="KW-0129">CBS domain</keyword>
<keyword id="KW-0868">Chloride</keyword>
<keyword id="KW-0869">Chloride channel</keyword>
<keyword id="KW-0407">Ion channel</keyword>
<keyword id="KW-0406">Ion transport</keyword>
<keyword id="KW-0472">Membrane</keyword>
<keyword id="KW-0597">Phosphoprotein</keyword>
<keyword id="KW-1185">Reference proteome</keyword>
<keyword id="KW-0677">Repeat</keyword>
<keyword id="KW-0812">Transmembrane</keyword>
<keyword id="KW-1133">Transmembrane helix</keyword>
<keyword id="KW-0813">Transport</keyword>
<keyword id="KW-0851">Voltage-gated channel</keyword>